<protein>
    <recommendedName>
        <fullName evidence="1">4-hydroxy-tetrahydrodipicolinate reductase</fullName>
        <shortName evidence="1">HTPA reductase</shortName>
        <ecNumber evidence="1">1.17.1.8</ecNumber>
    </recommendedName>
</protein>
<sequence length="241" mass="26995">MKILLIGYGAMNQRVARLAEEKGHEIIGVIEPQKNETTPYTHYDHITDAQNEADVAIDFSNPNLLFPLLEEEFQLPLVIATTGEKEKLIEKLNELSHNMPVFFSANMSYGVHALTKILEAAIPLLQDYDIELTEAHHNKKVDAPSGTLVKLYDVIKDLRQNITPVYDRHELTEQRTKDEVGIHSIRGGTIVGEHDVLFAGTDETITLSHKAQSKDIFANGAITAAEKLINQSNGYYTFDNL</sequence>
<name>DAPB_STAHJ</name>
<dbReference type="EC" id="1.17.1.8" evidence="1"/>
<dbReference type="EMBL" id="AP006716">
    <property type="protein sequence ID" value="BAE04824.1"/>
    <property type="molecule type" value="Genomic_DNA"/>
</dbReference>
<dbReference type="RefSeq" id="WP_011275807.1">
    <property type="nucleotide sequence ID" value="NC_007168.1"/>
</dbReference>
<dbReference type="SMR" id="Q4L6A1"/>
<dbReference type="KEGG" id="sha:SH1515"/>
<dbReference type="eggNOG" id="COG0289">
    <property type="taxonomic scope" value="Bacteria"/>
</dbReference>
<dbReference type="HOGENOM" id="CLU_047479_2_2_9"/>
<dbReference type="OrthoDB" id="9790352at2"/>
<dbReference type="UniPathway" id="UPA00034">
    <property type="reaction ID" value="UER00018"/>
</dbReference>
<dbReference type="Proteomes" id="UP000000543">
    <property type="component" value="Chromosome"/>
</dbReference>
<dbReference type="GO" id="GO:0005829">
    <property type="term" value="C:cytosol"/>
    <property type="evidence" value="ECO:0007669"/>
    <property type="project" value="TreeGrafter"/>
</dbReference>
<dbReference type="GO" id="GO:0008839">
    <property type="term" value="F:4-hydroxy-tetrahydrodipicolinate reductase"/>
    <property type="evidence" value="ECO:0007669"/>
    <property type="project" value="UniProtKB-EC"/>
</dbReference>
<dbReference type="GO" id="GO:0051287">
    <property type="term" value="F:NAD binding"/>
    <property type="evidence" value="ECO:0007669"/>
    <property type="project" value="UniProtKB-UniRule"/>
</dbReference>
<dbReference type="GO" id="GO:0050661">
    <property type="term" value="F:NADP binding"/>
    <property type="evidence" value="ECO:0007669"/>
    <property type="project" value="UniProtKB-UniRule"/>
</dbReference>
<dbReference type="GO" id="GO:0016726">
    <property type="term" value="F:oxidoreductase activity, acting on CH or CH2 groups, NAD or NADP as acceptor"/>
    <property type="evidence" value="ECO:0007669"/>
    <property type="project" value="UniProtKB-UniRule"/>
</dbReference>
<dbReference type="GO" id="GO:0019877">
    <property type="term" value="P:diaminopimelate biosynthetic process"/>
    <property type="evidence" value="ECO:0007669"/>
    <property type="project" value="UniProtKB-UniRule"/>
</dbReference>
<dbReference type="GO" id="GO:0009089">
    <property type="term" value="P:lysine biosynthetic process via diaminopimelate"/>
    <property type="evidence" value="ECO:0007669"/>
    <property type="project" value="UniProtKB-UniRule"/>
</dbReference>
<dbReference type="CDD" id="cd02274">
    <property type="entry name" value="DHDPR_N"/>
    <property type="match status" value="1"/>
</dbReference>
<dbReference type="FunFam" id="3.30.360.10:FF:000009">
    <property type="entry name" value="4-hydroxy-tetrahydrodipicolinate reductase"/>
    <property type="match status" value="1"/>
</dbReference>
<dbReference type="Gene3D" id="3.30.360.10">
    <property type="entry name" value="Dihydrodipicolinate Reductase, domain 2"/>
    <property type="match status" value="1"/>
</dbReference>
<dbReference type="Gene3D" id="3.40.50.720">
    <property type="entry name" value="NAD(P)-binding Rossmann-like Domain"/>
    <property type="match status" value="1"/>
</dbReference>
<dbReference type="HAMAP" id="MF_00102">
    <property type="entry name" value="DapB"/>
    <property type="match status" value="1"/>
</dbReference>
<dbReference type="InterPro" id="IPR022663">
    <property type="entry name" value="DapB_C"/>
</dbReference>
<dbReference type="InterPro" id="IPR000846">
    <property type="entry name" value="DapB_N"/>
</dbReference>
<dbReference type="InterPro" id="IPR022664">
    <property type="entry name" value="DapB_N_CS"/>
</dbReference>
<dbReference type="InterPro" id="IPR023940">
    <property type="entry name" value="DHDPR_bac"/>
</dbReference>
<dbReference type="InterPro" id="IPR036291">
    <property type="entry name" value="NAD(P)-bd_dom_sf"/>
</dbReference>
<dbReference type="NCBIfam" id="TIGR00036">
    <property type="entry name" value="dapB"/>
    <property type="match status" value="1"/>
</dbReference>
<dbReference type="PANTHER" id="PTHR20836:SF7">
    <property type="entry name" value="4-HYDROXY-TETRAHYDRODIPICOLINATE REDUCTASE"/>
    <property type="match status" value="1"/>
</dbReference>
<dbReference type="PANTHER" id="PTHR20836">
    <property type="entry name" value="DIHYDRODIPICOLINATE REDUCTASE"/>
    <property type="match status" value="1"/>
</dbReference>
<dbReference type="Pfam" id="PF05173">
    <property type="entry name" value="DapB_C"/>
    <property type="match status" value="1"/>
</dbReference>
<dbReference type="Pfam" id="PF01113">
    <property type="entry name" value="DapB_N"/>
    <property type="match status" value="1"/>
</dbReference>
<dbReference type="PIRSF" id="PIRSF000161">
    <property type="entry name" value="DHPR"/>
    <property type="match status" value="1"/>
</dbReference>
<dbReference type="SUPFAM" id="SSF55347">
    <property type="entry name" value="Glyceraldehyde-3-phosphate dehydrogenase-like, C-terminal domain"/>
    <property type="match status" value="1"/>
</dbReference>
<dbReference type="SUPFAM" id="SSF51735">
    <property type="entry name" value="NAD(P)-binding Rossmann-fold domains"/>
    <property type="match status" value="1"/>
</dbReference>
<dbReference type="PROSITE" id="PS01298">
    <property type="entry name" value="DAPB"/>
    <property type="match status" value="1"/>
</dbReference>
<proteinExistence type="inferred from homology"/>
<comment type="function">
    <text evidence="1">Catalyzes the conversion of 4-hydroxy-tetrahydrodipicolinate (HTPA) to tetrahydrodipicolinate.</text>
</comment>
<comment type="catalytic activity">
    <reaction evidence="1">
        <text>(S)-2,3,4,5-tetrahydrodipicolinate + NAD(+) + H2O = (2S,4S)-4-hydroxy-2,3,4,5-tetrahydrodipicolinate + NADH + H(+)</text>
        <dbReference type="Rhea" id="RHEA:35323"/>
        <dbReference type="ChEBI" id="CHEBI:15377"/>
        <dbReference type="ChEBI" id="CHEBI:15378"/>
        <dbReference type="ChEBI" id="CHEBI:16845"/>
        <dbReference type="ChEBI" id="CHEBI:57540"/>
        <dbReference type="ChEBI" id="CHEBI:57945"/>
        <dbReference type="ChEBI" id="CHEBI:67139"/>
        <dbReference type="EC" id="1.17.1.8"/>
    </reaction>
</comment>
<comment type="catalytic activity">
    <reaction evidence="1">
        <text>(S)-2,3,4,5-tetrahydrodipicolinate + NADP(+) + H2O = (2S,4S)-4-hydroxy-2,3,4,5-tetrahydrodipicolinate + NADPH + H(+)</text>
        <dbReference type="Rhea" id="RHEA:35331"/>
        <dbReference type="ChEBI" id="CHEBI:15377"/>
        <dbReference type="ChEBI" id="CHEBI:15378"/>
        <dbReference type="ChEBI" id="CHEBI:16845"/>
        <dbReference type="ChEBI" id="CHEBI:57783"/>
        <dbReference type="ChEBI" id="CHEBI:58349"/>
        <dbReference type="ChEBI" id="CHEBI:67139"/>
        <dbReference type="EC" id="1.17.1.8"/>
    </reaction>
</comment>
<comment type="pathway">
    <text evidence="1">Amino-acid biosynthesis; L-lysine biosynthesis via DAP pathway; (S)-tetrahydrodipicolinate from L-aspartate: step 4/4.</text>
</comment>
<comment type="subcellular location">
    <subcellularLocation>
        <location evidence="1">Cytoplasm</location>
    </subcellularLocation>
</comment>
<comment type="similarity">
    <text evidence="1">Belongs to the DapB family.</text>
</comment>
<comment type="caution">
    <text evidence="2">Was originally thought to be a dihydrodipicolinate reductase (DHDPR), catalyzing the conversion of dihydrodipicolinate to tetrahydrodipicolinate. However, it was shown in E.coli that the substrate of the enzymatic reaction is not dihydrodipicolinate (DHDP) but in fact (2S,4S)-4-hydroxy-2,3,4,5-tetrahydrodipicolinic acid (HTPA), the product released by the DapA-catalyzed reaction.</text>
</comment>
<keyword id="KW-0028">Amino-acid biosynthesis</keyword>
<keyword id="KW-0963">Cytoplasm</keyword>
<keyword id="KW-0220">Diaminopimelate biosynthesis</keyword>
<keyword id="KW-0457">Lysine biosynthesis</keyword>
<keyword id="KW-0520">NAD</keyword>
<keyword id="KW-0521">NADP</keyword>
<keyword id="KW-0560">Oxidoreductase</keyword>
<feature type="chain" id="PRO_0000228391" description="4-hydroxy-tetrahydrodipicolinate reductase">
    <location>
        <begin position="1"/>
        <end position="241"/>
    </location>
</feature>
<feature type="active site" description="Proton donor/acceptor" evidence="1">
    <location>
        <position position="136"/>
    </location>
</feature>
<feature type="active site" description="Proton donor" evidence="1">
    <location>
        <position position="140"/>
    </location>
</feature>
<feature type="binding site" evidence="1">
    <location>
        <begin position="80"/>
        <end position="82"/>
    </location>
    <ligand>
        <name>NAD(+)</name>
        <dbReference type="ChEBI" id="CHEBI:57540"/>
    </ligand>
</feature>
<feature type="binding site" evidence="1">
    <location>
        <begin position="104"/>
        <end position="107"/>
    </location>
    <ligand>
        <name>NAD(+)</name>
        <dbReference type="ChEBI" id="CHEBI:57540"/>
    </ligand>
</feature>
<feature type="binding site" evidence="1">
    <location>
        <position position="137"/>
    </location>
    <ligand>
        <name>(S)-2,3,4,5-tetrahydrodipicolinate</name>
        <dbReference type="ChEBI" id="CHEBI:16845"/>
    </ligand>
</feature>
<feature type="binding site" evidence="1">
    <location>
        <begin position="146"/>
        <end position="147"/>
    </location>
    <ligand>
        <name>(S)-2,3,4,5-tetrahydrodipicolinate</name>
        <dbReference type="ChEBI" id="CHEBI:16845"/>
    </ligand>
</feature>
<reference key="1">
    <citation type="journal article" date="2005" name="J. Bacteriol.">
        <title>Whole-genome sequencing of Staphylococcus haemolyticus uncovers the extreme plasticity of its genome and the evolution of human-colonizing staphylococcal species.</title>
        <authorList>
            <person name="Takeuchi F."/>
            <person name="Watanabe S."/>
            <person name="Baba T."/>
            <person name="Yuzawa H."/>
            <person name="Ito T."/>
            <person name="Morimoto Y."/>
            <person name="Kuroda M."/>
            <person name="Cui L."/>
            <person name="Takahashi M."/>
            <person name="Ankai A."/>
            <person name="Baba S."/>
            <person name="Fukui S."/>
            <person name="Lee J.C."/>
            <person name="Hiramatsu K."/>
        </authorList>
    </citation>
    <scope>NUCLEOTIDE SEQUENCE [LARGE SCALE GENOMIC DNA]</scope>
    <source>
        <strain>JCSC1435</strain>
    </source>
</reference>
<organism>
    <name type="scientific">Staphylococcus haemolyticus (strain JCSC1435)</name>
    <dbReference type="NCBI Taxonomy" id="279808"/>
    <lineage>
        <taxon>Bacteria</taxon>
        <taxon>Bacillati</taxon>
        <taxon>Bacillota</taxon>
        <taxon>Bacilli</taxon>
        <taxon>Bacillales</taxon>
        <taxon>Staphylococcaceae</taxon>
        <taxon>Staphylococcus</taxon>
    </lineage>
</organism>
<gene>
    <name evidence="1" type="primary">dapB</name>
    <name type="ordered locus">SH1515</name>
</gene>
<evidence type="ECO:0000255" key="1">
    <source>
        <dbReference type="HAMAP-Rule" id="MF_00102"/>
    </source>
</evidence>
<evidence type="ECO:0000305" key="2"/>
<accession>Q4L6A1</accession>